<protein>
    <recommendedName>
        <fullName evidence="1">Uracil phosphoribosyltransferase</fullName>
        <ecNumber evidence="1">2.4.2.9</ecNumber>
    </recommendedName>
    <alternativeName>
        <fullName evidence="1">UMP pyrophosphorylase</fullName>
    </alternativeName>
    <alternativeName>
        <fullName evidence="1">UPRTase</fullName>
    </alternativeName>
</protein>
<organism>
    <name type="scientific">Yersinia pseudotuberculosis serotype I (strain IP32953)</name>
    <dbReference type="NCBI Taxonomy" id="273123"/>
    <lineage>
        <taxon>Bacteria</taxon>
        <taxon>Pseudomonadati</taxon>
        <taxon>Pseudomonadota</taxon>
        <taxon>Gammaproteobacteria</taxon>
        <taxon>Enterobacterales</taxon>
        <taxon>Yersiniaceae</taxon>
        <taxon>Yersinia</taxon>
    </lineage>
</organism>
<comment type="function">
    <text evidence="1">Catalyzes the conversion of uracil and 5-phospho-alpha-D-ribose 1-diphosphate (PRPP) to UMP and diphosphate.</text>
</comment>
<comment type="catalytic activity">
    <reaction evidence="1">
        <text>UMP + diphosphate = 5-phospho-alpha-D-ribose 1-diphosphate + uracil</text>
        <dbReference type="Rhea" id="RHEA:13017"/>
        <dbReference type="ChEBI" id="CHEBI:17568"/>
        <dbReference type="ChEBI" id="CHEBI:33019"/>
        <dbReference type="ChEBI" id="CHEBI:57865"/>
        <dbReference type="ChEBI" id="CHEBI:58017"/>
        <dbReference type="EC" id="2.4.2.9"/>
    </reaction>
</comment>
<comment type="cofactor">
    <cofactor evidence="1">
        <name>Mg(2+)</name>
        <dbReference type="ChEBI" id="CHEBI:18420"/>
    </cofactor>
    <text evidence="1">Binds 1 Mg(2+) ion per subunit. The magnesium is bound as Mg-PRPP.</text>
</comment>
<comment type="activity regulation">
    <text evidence="1">Allosterically activated by GTP.</text>
</comment>
<comment type="pathway">
    <text evidence="1">Pyrimidine metabolism; UMP biosynthesis via salvage pathway; UMP from uracil: step 1/1.</text>
</comment>
<comment type="similarity">
    <text evidence="1">Belongs to the UPRTase family.</text>
</comment>
<feature type="chain" id="PRO_0000120916" description="Uracil phosphoribosyltransferase">
    <location>
        <begin position="1"/>
        <end position="208"/>
    </location>
</feature>
<feature type="binding site" evidence="1">
    <location>
        <position position="78"/>
    </location>
    <ligand>
        <name>5-phospho-alpha-D-ribose 1-diphosphate</name>
        <dbReference type="ChEBI" id="CHEBI:58017"/>
    </ligand>
</feature>
<feature type="binding site" evidence="1">
    <location>
        <position position="103"/>
    </location>
    <ligand>
        <name>5-phospho-alpha-D-ribose 1-diphosphate</name>
        <dbReference type="ChEBI" id="CHEBI:58017"/>
    </ligand>
</feature>
<feature type="binding site" evidence="1">
    <location>
        <begin position="130"/>
        <end position="138"/>
    </location>
    <ligand>
        <name>5-phospho-alpha-D-ribose 1-diphosphate</name>
        <dbReference type="ChEBI" id="CHEBI:58017"/>
    </ligand>
</feature>
<feature type="binding site" evidence="1">
    <location>
        <position position="193"/>
    </location>
    <ligand>
        <name>uracil</name>
        <dbReference type="ChEBI" id="CHEBI:17568"/>
    </ligand>
</feature>
<feature type="binding site" evidence="1">
    <location>
        <begin position="198"/>
        <end position="200"/>
    </location>
    <ligand>
        <name>uracil</name>
        <dbReference type="ChEBI" id="CHEBI:17568"/>
    </ligand>
</feature>
<feature type="binding site" evidence="1">
    <location>
        <position position="199"/>
    </location>
    <ligand>
        <name>5-phospho-alpha-D-ribose 1-diphosphate</name>
        <dbReference type="ChEBI" id="CHEBI:58017"/>
    </ligand>
</feature>
<sequence length="208" mass="22574">MKIVEVKHPLVKHKLGLMRENDISTKRFRELASEVGSLLTYVATADLETETVTIEGWNGPVEIEQIKGKKITVVPILRAGLGMMEGVLENVPSARISVVGVYRDEETLKPVPYFQKLVSNINERMALVVDPMLATGGSMIATIDLLKKAGCQSIKVLVLVAAPEGIKALEEAHPDVELYTASIDQGLNEHGYIIPGLGDAGDKIFGTK</sequence>
<evidence type="ECO:0000255" key="1">
    <source>
        <dbReference type="HAMAP-Rule" id="MF_01218"/>
    </source>
</evidence>
<proteinExistence type="inferred from homology"/>
<gene>
    <name evidence="1" type="primary">upp</name>
    <name type="ordered locus">YPTB2794</name>
</gene>
<name>UPP_YERPS</name>
<reference key="1">
    <citation type="journal article" date="2004" name="Proc. Natl. Acad. Sci. U.S.A.">
        <title>Insights into the evolution of Yersinia pestis through whole-genome comparison with Yersinia pseudotuberculosis.</title>
        <authorList>
            <person name="Chain P.S.G."/>
            <person name="Carniel E."/>
            <person name="Larimer F.W."/>
            <person name="Lamerdin J."/>
            <person name="Stoutland P.O."/>
            <person name="Regala W.M."/>
            <person name="Georgescu A.M."/>
            <person name="Vergez L.M."/>
            <person name="Land M.L."/>
            <person name="Motin V.L."/>
            <person name="Brubaker R.R."/>
            <person name="Fowler J."/>
            <person name="Hinnebusch J."/>
            <person name="Marceau M."/>
            <person name="Medigue C."/>
            <person name="Simonet M."/>
            <person name="Chenal-Francisque V."/>
            <person name="Souza B."/>
            <person name="Dacheux D."/>
            <person name="Elliott J.M."/>
            <person name="Derbise A."/>
            <person name="Hauser L.J."/>
            <person name="Garcia E."/>
        </authorList>
    </citation>
    <scope>NUCLEOTIDE SEQUENCE [LARGE SCALE GENOMIC DNA]</scope>
    <source>
        <strain>IP32953</strain>
    </source>
</reference>
<dbReference type="EC" id="2.4.2.9" evidence="1"/>
<dbReference type="EMBL" id="BX936398">
    <property type="protein sequence ID" value="CAH22032.1"/>
    <property type="molecule type" value="Genomic_DNA"/>
</dbReference>
<dbReference type="RefSeq" id="WP_002209776.1">
    <property type="nucleotide sequence ID" value="NZ_CP009712.1"/>
</dbReference>
<dbReference type="SMR" id="Q668E6"/>
<dbReference type="GeneID" id="96666287"/>
<dbReference type="KEGG" id="ypo:BZ17_3837"/>
<dbReference type="KEGG" id="yps:YPTB2794"/>
<dbReference type="PATRIC" id="fig|273123.14.peg.4027"/>
<dbReference type="UniPathway" id="UPA00574">
    <property type="reaction ID" value="UER00636"/>
</dbReference>
<dbReference type="Proteomes" id="UP000001011">
    <property type="component" value="Chromosome"/>
</dbReference>
<dbReference type="GO" id="GO:0005525">
    <property type="term" value="F:GTP binding"/>
    <property type="evidence" value="ECO:0007669"/>
    <property type="project" value="UniProtKB-KW"/>
</dbReference>
<dbReference type="GO" id="GO:0000287">
    <property type="term" value="F:magnesium ion binding"/>
    <property type="evidence" value="ECO:0007669"/>
    <property type="project" value="UniProtKB-UniRule"/>
</dbReference>
<dbReference type="GO" id="GO:0004845">
    <property type="term" value="F:uracil phosphoribosyltransferase activity"/>
    <property type="evidence" value="ECO:0007669"/>
    <property type="project" value="UniProtKB-UniRule"/>
</dbReference>
<dbReference type="GO" id="GO:0044206">
    <property type="term" value="P:UMP salvage"/>
    <property type="evidence" value="ECO:0007669"/>
    <property type="project" value="UniProtKB-UniRule"/>
</dbReference>
<dbReference type="GO" id="GO:0006223">
    <property type="term" value="P:uracil salvage"/>
    <property type="evidence" value="ECO:0007669"/>
    <property type="project" value="InterPro"/>
</dbReference>
<dbReference type="CDD" id="cd06223">
    <property type="entry name" value="PRTases_typeI"/>
    <property type="match status" value="1"/>
</dbReference>
<dbReference type="FunFam" id="3.40.50.2020:FF:000003">
    <property type="entry name" value="Uracil phosphoribosyltransferase"/>
    <property type="match status" value="1"/>
</dbReference>
<dbReference type="Gene3D" id="3.40.50.2020">
    <property type="match status" value="1"/>
</dbReference>
<dbReference type="HAMAP" id="MF_01218_B">
    <property type="entry name" value="Upp_B"/>
    <property type="match status" value="1"/>
</dbReference>
<dbReference type="InterPro" id="IPR000836">
    <property type="entry name" value="PRibTrfase_dom"/>
</dbReference>
<dbReference type="InterPro" id="IPR029057">
    <property type="entry name" value="PRTase-like"/>
</dbReference>
<dbReference type="InterPro" id="IPR034332">
    <property type="entry name" value="Upp_B"/>
</dbReference>
<dbReference type="InterPro" id="IPR050054">
    <property type="entry name" value="UPRTase/APRTase"/>
</dbReference>
<dbReference type="InterPro" id="IPR005765">
    <property type="entry name" value="Ura_phspho_trans"/>
</dbReference>
<dbReference type="NCBIfam" id="NF001097">
    <property type="entry name" value="PRK00129.1"/>
    <property type="match status" value="1"/>
</dbReference>
<dbReference type="NCBIfam" id="TIGR01091">
    <property type="entry name" value="upp"/>
    <property type="match status" value="1"/>
</dbReference>
<dbReference type="PANTHER" id="PTHR32315">
    <property type="entry name" value="ADENINE PHOSPHORIBOSYLTRANSFERASE"/>
    <property type="match status" value="1"/>
</dbReference>
<dbReference type="PANTHER" id="PTHR32315:SF4">
    <property type="entry name" value="URACIL PHOSPHORIBOSYLTRANSFERASE, CHLOROPLASTIC"/>
    <property type="match status" value="1"/>
</dbReference>
<dbReference type="Pfam" id="PF14681">
    <property type="entry name" value="UPRTase"/>
    <property type="match status" value="1"/>
</dbReference>
<dbReference type="SUPFAM" id="SSF53271">
    <property type="entry name" value="PRTase-like"/>
    <property type="match status" value="1"/>
</dbReference>
<keyword id="KW-0021">Allosteric enzyme</keyword>
<keyword id="KW-0328">Glycosyltransferase</keyword>
<keyword id="KW-0342">GTP-binding</keyword>
<keyword id="KW-0460">Magnesium</keyword>
<keyword id="KW-0547">Nucleotide-binding</keyword>
<keyword id="KW-0808">Transferase</keyword>
<accession>Q668E6</accession>